<accession>Q2TQ13</accession>
<keyword id="KW-0249">Electron transport</keyword>
<keyword id="KW-0472">Membrane</keyword>
<keyword id="KW-0496">Mitochondrion</keyword>
<keyword id="KW-0999">Mitochondrion inner membrane</keyword>
<keyword id="KW-0520">NAD</keyword>
<keyword id="KW-0679">Respiratory chain</keyword>
<keyword id="KW-1278">Translocase</keyword>
<keyword id="KW-0812">Transmembrane</keyword>
<keyword id="KW-1133">Transmembrane helix</keyword>
<keyword id="KW-0813">Transport</keyword>
<keyword id="KW-0830">Ubiquinone</keyword>
<dbReference type="EC" id="7.1.1.2" evidence="1"/>
<dbReference type="EMBL" id="AY691839">
    <property type="protein sequence ID" value="AAW29762.1"/>
    <property type="molecule type" value="Genomic_DNA"/>
</dbReference>
<dbReference type="SMR" id="Q2TQ13"/>
<dbReference type="GO" id="GO:0005743">
    <property type="term" value="C:mitochondrial inner membrane"/>
    <property type="evidence" value="ECO:0000250"/>
    <property type="project" value="UniProtKB"/>
</dbReference>
<dbReference type="GO" id="GO:0008137">
    <property type="term" value="F:NADH dehydrogenase (ubiquinone) activity"/>
    <property type="evidence" value="ECO:0000250"/>
    <property type="project" value="UniProtKB"/>
</dbReference>
<dbReference type="GO" id="GO:0006120">
    <property type="term" value="P:mitochondrial electron transport, NADH to ubiquinone"/>
    <property type="evidence" value="ECO:0000250"/>
    <property type="project" value="UniProtKB"/>
</dbReference>
<dbReference type="GO" id="GO:0032981">
    <property type="term" value="P:mitochondrial respiratory chain complex I assembly"/>
    <property type="evidence" value="ECO:0000250"/>
    <property type="project" value="UniProtKB"/>
</dbReference>
<dbReference type="InterPro" id="IPR050175">
    <property type="entry name" value="Complex_I_Subunit_2"/>
</dbReference>
<dbReference type="InterPro" id="IPR010933">
    <property type="entry name" value="NADH_DH_su2_C"/>
</dbReference>
<dbReference type="InterPro" id="IPR003917">
    <property type="entry name" value="NADH_UbQ_OxRdtase_chain2"/>
</dbReference>
<dbReference type="InterPro" id="IPR001750">
    <property type="entry name" value="ND/Mrp_TM"/>
</dbReference>
<dbReference type="PANTHER" id="PTHR46552">
    <property type="entry name" value="NADH-UBIQUINONE OXIDOREDUCTASE CHAIN 2"/>
    <property type="match status" value="1"/>
</dbReference>
<dbReference type="PANTHER" id="PTHR46552:SF1">
    <property type="entry name" value="NADH-UBIQUINONE OXIDOREDUCTASE CHAIN 2"/>
    <property type="match status" value="1"/>
</dbReference>
<dbReference type="Pfam" id="PF06444">
    <property type="entry name" value="NADH_dehy_S2_C"/>
    <property type="match status" value="1"/>
</dbReference>
<dbReference type="Pfam" id="PF00361">
    <property type="entry name" value="Proton_antipo_M"/>
    <property type="match status" value="1"/>
</dbReference>
<dbReference type="PRINTS" id="PR01436">
    <property type="entry name" value="NADHDHGNASE2"/>
</dbReference>
<evidence type="ECO:0000250" key="1">
    <source>
        <dbReference type="UniProtKB" id="P03891"/>
    </source>
</evidence>
<evidence type="ECO:0000250" key="2">
    <source>
        <dbReference type="UniProtKB" id="P03892"/>
    </source>
</evidence>
<evidence type="ECO:0000255" key="3"/>
<evidence type="ECO:0000305" key="4"/>
<organism>
    <name type="scientific">Myosorex kihaulei</name>
    <name type="common">Kihaule's mouse shrew</name>
    <dbReference type="NCBI Taxonomy" id="307108"/>
    <lineage>
        <taxon>Eukaryota</taxon>
        <taxon>Metazoa</taxon>
        <taxon>Chordata</taxon>
        <taxon>Craniata</taxon>
        <taxon>Vertebrata</taxon>
        <taxon>Euteleostomi</taxon>
        <taxon>Mammalia</taxon>
        <taxon>Eutheria</taxon>
        <taxon>Laurasiatheria</taxon>
        <taxon>Eulipotyphla</taxon>
        <taxon>Soricidae</taxon>
        <taxon>Crocidurinae</taxon>
        <taxon>Myosorex</taxon>
    </lineage>
</organism>
<sequence length="347" mass="39293">MNPLIFIMLILTIILGTSIILTSTHWFMIWLGFEMNMMAMIPVLMKKYSPRAAEAATKYFLTQATASMILMLALIINLMYSGQWTIMNMTNNMASLLITIALTMKLGLAPFHFWVPEVTQGVSLQAGLILLTWQKIAPLAVMYQIFASINPNLLLTMALLSIMIGGWGGLNQTQLRKIMAYSSIAHMGWMTAIMIYNPNLMLLNLLLYILMTTSMFMMFMYNSTTTTLSLSLTWNKTPLMTVLMMTTLLSLGGLPPLTGFMPKWMIIHELTKNNSVILPTSMAILALINLFFYMRLTYSTSLTMFPTINNMKMKWQFQNTHHTTLLAPLITLSTLILPLTPMFILMT</sequence>
<proteinExistence type="inferred from homology"/>
<feature type="chain" id="PRO_0000226707" description="NADH-ubiquinone oxidoreductase chain 2">
    <location>
        <begin position="1"/>
        <end position="347"/>
    </location>
</feature>
<feature type="transmembrane region" description="Helical" evidence="3">
    <location>
        <begin position="1"/>
        <end position="21"/>
    </location>
</feature>
<feature type="transmembrane region" description="Helical" evidence="3">
    <location>
        <begin position="25"/>
        <end position="45"/>
    </location>
</feature>
<feature type="transmembrane region" description="Helical" evidence="3">
    <location>
        <begin position="59"/>
        <end position="79"/>
    </location>
</feature>
<feature type="transmembrane region" description="Helical" evidence="3">
    <location>
        <begin position="96"/>
        <end position="116"/>
    </location>
</feature>
<feature type="transmembrane region" description="Helical" evidence="3">
    <location>
        <begin position="122"/>
        <end position="142"/>
    </location>
</feature>
<feature type="transmembrane region" description="Helical" evidence="3">
    <location>
        <begin position="145"/>
        <end position="165"/>
    </location>
</feature>
<feature type="transmembrane region" description="Helical" evidence="3">
    <location>
        <begin position="178"/>
        <end position="198"/>
    </location>
</feature>
<feature type="transmembrane region" description="Helical" evidence="3">
    <location>
        <begin position="200"/>
        <end position="220"/>
    </location>
</feature>
<feature type="transmembrane region" description="Helical" evidence="3">
    <location>
        <begin position="242"/>
        <end position="262"/>
    </location>
</feature>
<feature type="transmembrane region" description="Helical" evidence="3">
    <location>
        <begin position="274"/>
        <end position="294"/>
    </location>
</feature>
<feature type="transmembrane region" description="Helical" evidence="3">
    <location>
        <begin position="325"/>
        <end position="345"/>
    </location>
</feature>
<comment type="function">
    <text evidence="1">Core subunit of the mitochondrial membrane respiratory chain NADH dehydrogenase (Complex I) which catalyzes electron transfer from NADH through the respiratory chain, using ubiquinone as an electron acceptor. Essential for the catalytic activity and assembly of complex I.</text>
</comment>
<comment type="catalytic activity">
    <reaction evidence="1">
        <text>a ubiquinone + NADH + 5 H(+)(in) = a ubiquinol + NAD(+) + 4 H(+)(out)</text>
        <dbReference type="Rhea" id="RHEA:29091"/>
        <dbReference type="Rhea" id="RHEA-COMP:9565"/>
        <dbReference type="Rhea" id="RHEA-COMP:9566"/>
        <dbReference type="ChEBI" id="CHEBI:15378"/>
        <dbReference type="ChEBI" id="CHEBI:16389"/>
        <dbReference type="ChEBI" id="CHEBI:17976"/>
        <dbReference type="ChEBI" id="CHEBI:57540"/>
        <dbReference type="ChEBI" id="CHEBI:57945"/>
        <dbReference type="EC" id="7.1.1.2"/>
    </reaction>
</comment>
<comment type="subunit">
    <text evidence="1 2">Core subunit of respiratory chain NADH dehydrogenase (Complex I) which is composed of 45 different subunits. Interacts with TMEM242 (By similarity).</text>
</comment>
<comment type="subcellular location">
    <subcellularLocation>
        <location evidence="2">Mitochondrion inner membrane</location>
        <topology evidence="3">Multi-pass membrane protein</topology>
    </subcellularLocation>
</comment>
<comment type="similarity">
    <text evidence="4">Belongs to the complex I subunit 2 family.</text>
</comment>
<reference key="1">
    <citation type="submission" date="2004-07" db="EMBL/GenBank/DDBJ databases">
        <title>Phylogeny, phylogeography, and geographic variation of Sylvisorex howelli, an endemic shrew of the Eastern Arc mountains.</title>
        <authorList>
            <person name="Stanley W.T."/>
            <person name="Olson L.E."/>
        </authorList>
    </citation>
    <scope>NUCLEOTIDE SEQUENCE [GENOMIC DNA]</scope>
</reference>
<protein>
    <recommendedName>
        <fullName evidence="1">NADH-ubiquinone oxidoreductase chain 2</fullName>
        <ecNumber evidence="1">7.1.1.2</ecNumber>
    </recommendedName>
    <alternativeName>
        <fullName>NADH dehydrogenase subunit 2</fullName>
    </alternativeName>
</protein>
<name>NU2M_MYOKI</name>
<geneLocation type="mitochondrion"/>
<gene>
    <name evidence="1" type="primary">MT-ND2</name>
    <name type="synonym">MTND2</name>
    <name type="synonym">NADH2</name>
    <name type="synonym">ND2</name>
</gene>